<feature type="initiator methionine" description="Removed" evidence="2">
    <location>
        <position position="1"/>
    </location>
</feature>
<feature type="chain" id="PRO_0000206154" description="14 kDa phosphohistidine phosphatase">
    <location>
        <begin position="2"/>
        <end position="126"/>
    </location>
</feature>
<feature type="active site" description="Proton acceptor" evidence="1">
    <location>
        <position position="54"/>
    </location>
</feature>
<feature type="binding site" evidence="1">
    <location>
        <position position="22"/>
    </location>
    <ligand>
        <name>substrate</name>
    </ligand>
</feature>
<feature type="binding site" evidence="1">
    <location>
        <begin position="95"/>
        <end position="97"/>
    </location>
    <ligand>
        <name>substrate</name>
    </ligand>
</feature>
<keyword id="KW-0963">Cytoplasm</keyword>
<keyword id="KW-0903">Direct protein sequencing</keyword>
<keyword id="KW-0378">Hydrolase</keyword>
<keyword id="KW-0904">Protein phosphatase</keyword>
<keyword id="KW-1185">Reference proteome</keyword>
<accession>P59083</accession>
<accession>F1RWN4</accession>
<comment type="function">
    <text evidence="2">Exhibits phosphohistidine phosphatase activity.</text>
</comment>
<comment type="catalytic activity">
    <reaction evidence="2">
        <text>N(pros)-phospho-L-histidyl-[protein] + H2O = L-histidyl-[protein] + phosphate</text>
        <dbReference type="Rhea" id="RHEA:47964"/>
        <dbReference type="Rhea" id="RHEA-COMP:9745"/>
        <dbReference type="Rhea" id="RHEA-COMP:9746"/>
        <dbReference type="ChEBI" id="CHEBI:15377"/>
        <dbReference type="ChEBI" id="CHEBI:29979"/>
        <dbReference type="ChEBI" id="CHEBI:43474"/>
        <dbReference type="ChEBI" id="CHEBI:64837"/>
        <dbReference type="EC" id="3.9.1.3"/>
    </reaction>
</comment>
<comment type="catalytic activity">
    <reaction evidence="2">
        <text>N(tele)-phospho-L-histidyl-[protein] + H2O = L-histidyl-[protein] + phosphate</text>
        <dbReference type="Rhea" id="RHEA:47960"/>
        <dbReference type="Rhea" id="RHEA-COMP:9745"/>
        <dbReference type="Rhea" id="RHEA-COMP:10719"/>
        <dbReference type="ChEBI" id="CHEBI:15377"/>
        <dbReference type="ChEBI" id="CHEBI:29979"/>
        <dbReference type="ChEBI" id="CHEBI:43474"/>
        <dbReference type="ChEBI" id="CHEBI:83586"/>
        <dbReference type="EC" id="3.9.1.3"/>
    </reaction>
</comment>
<comment type="subunit">
    <text evidence="2">Monomer.</text>
</comment>
<comment type="subcellular location">
    <subcellularLocation>
        <location>Cytoplasm</location>
    </subcellularLocation>
</comment>
<comment type="similarity">
    <text evidence="4">Belongs to the janus family.</text>
</comment>
<sequence length="126" mass="13932">MAAAADLAQIPDVDIDSDGVFKYVLIRVHAVSPPGTPAGESKEIVRGYKWAEYHADIYDKVSGEMQKKGIDCECLGGGRISHQSQDKKIHVYGYSMGYGRAQHSISTEKIKARYPDYSVTWADDGY</sequence>
<name>PHP14_PIG</name>
<evidence type="ECO:0000250" key="1">
    <source>
        <dbReference type="UniProtKB" id="Q9NRX4"/>
    </source>
</evidence>
<evidence type="ECO:0000269" key="2">
    <source>
    </source>
</evidence>
<evidence type="ECO:0000303" key="3">
    <source>
    </source>
</evidence>
<evidence type="ECO:0000305" key="4"/>
<protein>
    <recommendedName>
        <fullName evidence="3">14 kDa phosphohistidine phosphatase</fullName>
        <ecNumber evidence="2">3.9.1.3</ecNumber>
    </recommendedName>
    <alternativeName>
        <fullName>Phosphohistidine phosphatase 1</fullName>
        <shortName>PHPT1</shortName>
    </alternativeName>
    <alternativeName>
        <fullName>Protein histidine phosphatase</fullName>
        <shortName>PHP</shortName>
    </alternativeName>
</protein>
<gene>
    <name type="primary">PHPT1</name>
    <name type="synonym">PHP14</name>
</gene>
<organism>
    <name type="scientific">Sus scrofa</name>
    <name type="common">Pig</name>
    <dbReference type="NCBI Taxonomy" id="9823"/>
    <lineage>
        <taxon>Eukaryota</taxon>
        <taxon>Metazoa</taxon>
        <taxon>Chordata</taxon>
        <taxon>Craniata</taxon>
        <taxon>Vertebrata</taxon>
        <taxon>Euteleostomi</taxon>
        <taxon>Mammalia</taxon>
        <taxon>Eutheria</taxon>
        <taxon>Laurasiatheria</taxon>
        <taxon>Artiodactyla</taxon>
        <taxon>Suina</taxon>
        <taxon>Suidae</taxon>
        <taxon>Sus</taxon>
    </lineage>
</organism>
<dbReference type="EC" id="3.9.1.3" evidence="2"/>
<dbReference type="EMBL" id="FP236151">
    <property type="status" value="NOT_ANNOTATED_CDS"/>
    <property type="molecule type" value="Genomic_DNA"/>
</dbReference>
<dbReference type="RefSeq" id="NP_001399201.1">
    <property type="nucleotide sequence ID" value="NM_001412272.1"/>
</dbReference>
<dbReference type="RefSeq" id="XP_005652779.1">
    <property type="nucleotide sequence ID" value="XM_005652722.1"/>
</dbReference>
<dbReference type="SMR" id="P59083"/>
<dbReference type="FunCoup" id="P59083">
    <property type="interactions" value="1753"/>
</dbReference>
<dbReference type="GlyGen" id="P59083">
    <property type="glycosylation" value="1 site"/>
</dbReference>
<dbReference type="PaxDb" id="9823-ENSSSCP00000006234"/>
<dbReference type="PeptideAtlas" id="P59083"/>
<dbReference type="Ensembl" id="ENSSSCT00070000111.1">
    <property type="protein sequence ID" value="ENSSSCP00070000097.1"/>
    <property type="gene ID" value="ENSSSCG00070000065.1"/>
</dbReference>
<dbReference type="Ensembl" id="ENSSSCT00115032019">
    <property type="protein sequence ID" value="ENSSSCP00115030440"/>
    <property type="gene ID" value="ENSSSCG00115018093"/>
</dbReference>
<dbReference type="GeneID" id="126964416"/>
<dbReference type="eggNOG" id="ENOG502S4DR">
    <property type="taxonomic scope" value="Eukaryota"/>
</dbReference>
<dbReference type="InParanoid" id="P59083"/>
<dbReference type="OMA" id="VRGYSWA"/>
<dbReference type="TreeFam" id="TF315158"/>
<dbReference type="Proteomes" id="UP000008227">
    <property type="component" value="Unplaced"/>
</dbReference>
<dbReference type="Proteomes" id="UP000314985">
    <property type="component" value="Chromosome 1"/>
</dbReference>
<dbReference type="Proteomes" id="UP000694570">
    <property type="component" value="Unplaced"/>
</dbReference>
<dbReference type="Proteomes" id="UP000694571">
    <property type="component" value="Unplaced"/>
</dbReference>
<dbReference type="Proteomes" id="UP000694720">
    <property type="component" value="Unplaced"/>
</dbReference>
<dbReference type="Proteomes" id="UP000694722">
    <property type="component" value="Unplaced"/>
</dbReference>
<dbReference type="Proteomes" id="UP000694723">
    <property type="component" value="Unplaced"/>
</dbReference>
<dbReference type="Proteomes" id="UP000694724">
    <property type="component" value="Unplaced"/>
</dbReference>
<dbReference type="Proteomes" id="UP000694725">
    <property type="component" value="Unplaced"/>
</dbReference>
<dbReference type="Proteomes" id="UP000694726">
    <property type="component" value="Unplaced"/>
</dbReference>
<dbReference type="Proteomes" id="UP000694727">
    <property type="component" value="Unplaced"/>
</dbReference>
<dbReference type="Proteomes" id="UP000694728">
    <property type="component" value="Unplaced"/>
</dbReference>
<dbReference type="GO" id="GO:0005829">
    <property type="term" value="C:cytosol"/>
    <property type="evidence" value="ECO:0000314"/>
    <property type="project" value="BHF-UCL"/>
</dbReference>
<dbReference type="GO" id="GO:0101006">
    <property type="term" value="F:protein histidine phosphatase activity"/>
    <property type="evidence" value="ECO:0000314"/>
    <property type="project" value="BHF-UCL"/>
</dbReference>
<dbReference type="GO" id="GO:2000147">
    <property type="term" value="P:positive regulation of cell motility"/>
    <property type="evidence" value="ECO:0000318"/>
    <property type="project" value="GO_Central"/>
</dbReference>
<dbReference type="FunFam" id="3.50.20.20:FF:000001">
    <property type="entry name" value="14 kDa phosphohistidine phosphatase"/>
    <property type="match status" value="1"/>
</dbReference>
<dbReference type="Gene3D" id="3.50.20.20">
    <property type="entry name" value="Janus/Ocnus"/>
    <property type="match status" value="1"/>
</dbReference>
<dbReference type="InterPro" id="IPR007702">
    <property type="entry name" value="Janus"/>
</dbReference>
<dbReference type="InterPro" id="IPR038596">
    <property type="entry name" value="Janus_sf"/>
</dbReference>
<dbReference type="PANTHER" id="PTHR12258:SF10">
    <property type="entry name" value="14 KDA PHOSPHOHISTIDINE PHOSPHATASE"/>
    <property type="match status" value="1"/>
</dbReference>
<dbReference type="PANTHER" id="PTHR12258">
    <property type="entry name" value="JANUS-A/JANUS-B"/>
    <property type="match status" value="1"/>
</dbReference>
<dbReference type="Pfam" id="PF05005">
    <property type="entry name" value="Ocnus"/>
    <property type="match status" value="1"/>
</dbReference>
<dbReference type="SUPFAM" id="SSF143724">
    <property type="entry name" value="PHP14-like"/>
    <property type="match status" value="1"/>
</dbReference>
<proteinExistence type="evidence at protein level"/>
<reference key="1">
    <citation type="submission" date="2009-11" db="EMBL/GenBank/DDBJ databases">
        <authorList>
            <consortium name="Porcine genome sequencing project"/>
        </authorList>
    </citation>
    <scope>NUCLEOTIDE SEQUENCE [LARGE SCALE GENOMIC DNA]</scope>
    <source>
        <strain>Duroc</strain>
    </source>
</reference>
<reference key="2">
    <citation type="journal article" date="2002" name="Eur. J. Biochem.">
        <title>Identification and characterization of a mammalian 14-kDa phosphohistidine phosphatase.</title>
        <authorList>
            <person name="Ek P."/>
            <person name="Pettersson G."/>
            <person name="Ek B."/>
            <person name="Gong F."/>
            <person name="Li J.-P."/>
            <person name="Zetterqvist O."/>
        </authorList>
    </citation>
    <scope>PROTEIN SEQUENCE OF 2-22; 49-59; 68-79 AND 118-126</scope>
    <scope>FUNCTION</scope>
    <scope>SUBUNIT</scope>
    <scope>CATALYTIC ACTIVITY</scope>
    <source>
        <tissue>Embryonic kidney</tissue>
    </source>
</reference>